<protein>
    <recommendedName>
        <fullName evidence="8">Glutamine synthetase</fullName>
        <shortName evidence="8">GS</shortName>
        <ecNumber evidence="7">6.3.1.2</ecNumber>
    </recommendedName>
    <alternativeName>
        <fullName evidence="9">Glutamate--ammonia ligase</fullName>
    </alternativeName>
    <alternativeName>
        <fullName evidence="9">Glutamine synthetase I alpha</fullName>
        <shortName evidence="9">GSI alpha</shortName>
    </alternativeName>
</protein>
<organism>
    <name type="scientific">Thermococcus kodakarensis (strain ATCC BAA-918 / JCM 12380 / KOD1)</name>
    <name type="common">Pyrococcus kodakaraensis (strain KOD1)</name>
    <dbReference type="NCBI Taxonomy" id="69014"/>
    <lineage>
        <taxon>Archaea</taxon>
        <taxon>Methanobacteriati</taxon>
        <taxon>Methanobacteriota</taxon>
        <taxon>Thermococci</taxon>
        <taxon>Thermococcales</taxon>
        <taxon>Thermococcaceae</taxon>
        <taxon>Thermococcus</taxon>
    </lineage>
</organism>
<evidence type="ECO:0000250" key="1">
    <source>
        <dbReference type="UniProtKB" id="P0A1P6"/>
    </source>
</evidence>
<evidence type="ECO:0000250" key="2">
    <source>
        <dbReference type="UniProtKB" id="P12425"/>
    </source>
</evidence>
<evidence type="ECO:0000250" key="3">
    <source>
        <dbReference type="UniProtKB" id="P77961"/>
    </source>
</evidence>
<evidence type="ECO:0000250" key="4">
    <source>
        <dbReference type="UniProtKB" id="P9WN39"/>
    </source>
</evidence>
<evidence type="ECO:0000255" key="5">
    <source>
        <dbReference type="PROSITE-ProRule" id="PRU01330"/>
    </source>
</evidence>
<evidence type="ECO:0000255" key="6">
    <source>
        <dbReference type="PROSITE-ProRule" id="PRU01331"/>
    </source>
</evidence>
<evidence type="ECO:0000269" key="7">
    <source>
    </source>
</evidence>
<evidence type="ECO:0000303" key="8">
    <source>
    </source>
</evidence>
<evidence type="ECO:0000305" key="9"/>
<evidence type="ECO:0000305" key="10">
    <source>
    </source>
</evidence>
<sequence length="443" mass="50308">MNEIKGIERAVQVEVPRPRFLLLAFTDINGSLKGMEIPMERYEEAVEDGVSFDGSSIPGFEGIEDSDLIFKADPSTYAEIPWEGIGRVYGYIYKGDEPYQADPRGILKRVLERLEKEGLKAHIGPEPEFYIFKKNGTWELHIPDSGGYFDLVGLDKAREIRREIALYMPYLGLKPEVLHHEVGKAQHEIDFRYDEALRTADNIVSFKHVVKAVAELHGYYATFMPKPIYGFPGNGMHLHISLWKDGENVFIGEDGLSDTALHFIGGILKHAKALAALTNPTVNSYKRLVPGYEAPVYISWGYRNRSALIRVPAFKGSGARIEYRCPDPSANPYLALAGILMVGLDGIKKKVEPDSYVETNVYEMDDAERERLGIDTLPGSLGEALEELKKDKTVREALGGAYKNFIDYKEREWEEYIEYLSSRDIPIDTKKVTEWELERYFYV</sequence>
<gene>
    <name evidence="8" type="primary">glnA</name>
    <name type="ordered locus">TK1796</name>
</gene>
<accession>O08467</accession>
<accession>Q5JJ67</accession>
<keyword id="KW-0067">ATP-binding</keyword>
<keyword id="KW-0963">Cytoplasm</keyword>
<keyword id="KW-0436">Ligase</keyword>
<keyword id="KW-0460">Magnesium</keyword>
<keyword id="KW-0464">Manganese</keyword>
<keyword id="KW-0479">Metal-binding</keyword>
<keyword id="KW-0547">Nucleotide-binding</keyword>
<keyword id="KW-1185">Reference proteome</keyword>
<feature type="chain" id="PRO_0000153211" description="Glutamine synthetase">
    <location>
        <begin position="1"/>
        <end position="443"/>
    </location>
</feature>
<feature type="domain" description="GS beta-grasp" evidence="5">
    <location>
        <begin position="11"/>
        <end position="97"/>
    </location>
</feature>
<feature type="domain" description="GS catalytic" evidence="6">
    <location>
        <begin position="103"/>
        <end position="443"/>
    </location>
</feature>
<feature type="binding site" evidence="4">
    <location>
        <position position="126"/>
    </location>
    <ligand>
        <name>Mg(2+)</name>
        <dbReference type="ChEBI" id="CHEBI:18420"/>
        <label>1</label>
    </ligand>
</feature>
<feature type="binding site" evidence="4">
    <location>
        <position position="128"/>
    </location>
    <ligand>
        <name>Mg(2+)</name>
        <dbReference type="ChEBI" id="CHEBI:18420"/>
        <label>2</label>
    </ligand>
</feature>
<feature type="binding site" evidence="4">
    <location>
        <position position="176"/>
    </location>
    <ligand>
        <name>ATP</name>
        <dbReference type="ChEBI" id="CHEBI:30616"/>
    </ligand>
</feature>
<feature type="binding site" evidence="4">
    <location>
        <position position="181"/>
    </location>
    <ligand>
        <name>Mg(2+)</name>
        <dbReference type="ChEBI" id="CHEBI:18420"/>
        <label>2</label>
    </ligand>
</feature>
<feature type="binding site" evidence="4">
    <location>
        <position position="188"/>
    </location>
    <ligand>
        <name>Mg(2+)</name>
        <dbReference type="ChEBI" id="CHEBI:18420"/>
        <label>2</label>
    </ligand>
</feature>
<feature type="binding site" evidence="2">
    <location>
        <position position="233"/>
    </location>
    <ligand>
        <name>L-glutamate</name>
        <dbReference type="ChEBI" id="CHEBI:29985"/>
    </ligand>
</feature>
<feature type="binding site" evidence="4">
    <location>
        <position position="237"/>
    </location>
    <ligand>
        <name>Mg(2+)</name>
        <dbReference type="ChEBI" id="CHEBI:18420"/>
        <label>1</label>
    </ligand>
</feature>
<feature type="binding site" evidence="4">
    <location>
        <begin position="239"/>
        <end position="241"/>
    </location>
    <ligand>
        <name>ATP</name>
        <dbReference type="ChEBI" id="CHEBI:30616"/>
    </ligand>
</feature>
<feature type="binding site" evidence="3">
    <location>
        <position position="241"/>
    </location>
    <ligand>
        <name>ATP</name>
        <dbReference type="ChEBI" id="CHEBI:30616"/>
    </ligand>
</feature>
<feature type="binding site" evidence="4">
    <location>
        <position position="287"/>
    </location>
    <ligand>
        <name>L-glutamate</name>
        <dbReference type="ChEBI" id="CHEBI:29985"/>
    </ligand>
</feature>
<feature type="binding site" evidence="1">
    <location>
        <position position="293"/>
    </location>
    <ligand>
        <name>L-glutamate</name>
        <dbReference type="ChEBI" id="CHEBI:29985"/>
    </ligand>
</feature>
<feature type="binding site" evidence="4">
    <location>
        <position position="305"/>
    </location>
    <ligand>
        <name>ATP</name>
        <dbReference type="ChEBI" id="CHEBI:30616"/>
    </ligand>
</feature>
<feature type="binding site" evidence="4">
    <location>
        <position position="305"/>
    </location>
    <ligand>
        <name>L-glutamate</name>
        <dbReference type="ChEBI" id="CHEBI:29985"/>
    </ligand>
</feature>
<feature type="binding site" evidence="4">
    <location>
        <position position="310"/>
    </location>
    <ligand>
        <name>ATP</name>
        <dbReference type="ChEBI" id="CHEBI:30616"/>
    </ligand>
</feature>
<feature type="binding site" evidence="4">
    <location>
        <position position="322"/>
    </location>
    <ligand>
        <name>Mg(2+)</name>
        <dbReference type="ChEBI" id="CHEBI:18420"/>
        <label>1</label>
    </ligand>
</feature>
<feature type="binding site" evidence="4">
    <location>
        <position position="324"/>
    </location>
    <ligand>
        <name>L-glutamate</name>
        <dbReference type="ChEBI" id="CHEBI:29985"/>
    </ligand>
</feature>
<feature type="sequence conflict" description="In Ref. 1; BAA20530." evidence="9" ref="1">
    <original>Y</original>
    <variation>N</variation>
    <location>
        <position position="402"/>
    </location>
</feature>
<comment type="function">
    <text evidence="7">Carries out the ATP-dependent synthesis of glutamine from ammonium nitrogen and glutamate. Exhibits both L-gamma-glutamylhydroxamate synthetase and gamma-glutamyltransferase activities when using hydroxylamine as substrate; in fact, the enzyme possesses low biosynthetic activity, suggesting that the reaction is biased towards the degradation of glutamine under ammonia-rich conditions. Might play some role in ammonia assimilation under ammonia-starvation conditions. Can also use GTP instead of ATP in the synthetase reaction, but not CTP or UTP.</text>
</comment>
<comment type="catalytic activity">
    <reaction evidence="7">
        <text>L-glutamate + NH4(+) + ATP = L-glutamine + ADP + phosphate + H(+)</text>
        <dbReference type="Rhea" id="RHEA:16169"/>
        <dbReference type="ChEBI" id="CHEBI:15378"/>
        <dbReference type="ChEBI" id="CHEBI:28938"/>
        <dbReference type="ChEBI" id="CHEBI:29985"/>
        <dbReference type="ChEBI" id="CHEBI:30616"/>
        <dbReference type="ChEBI" id="CHEBI:43474"/>
        <dbReference type="ChEBI" id="CHEBI:58359"/>
        <dbReference type="ChEBI" id="CHEBI:456216"/>
        <dbReference type="EC" id="6.3.1.2"/>
    </reaction>
</comment>
<comment type="catalytic activity">
    <reaction evidence="7">
        <text>hydroxylamine + L-glutamate + ATP = L-glutamine hydroxamate + ADP + phosphate</text>
        <dbReference type="Rhea" id="RHEA:45804"/>
        <dbReference type="ChEBI" id="CHEBI:15429"/>
        <dbReference type="ChEBI" id="CHEBI:29985"/>
        <dbReference type="ChEBI" id="CHEBI:30616"/>
        <dbReference type="ChEBI" id="CHEBI:43474"/>
        <dbReference type="ChEBI" id="CHEBI:85433"/>
        <dbReference type="ChEBI" id="CHEBI:456216"/>
    </reaction>
</comment>
<comment type="cofactor">
    <cofactor evidence="7">
        <name>Mg(2+)</name>
        <dbReference type="ChEBI" id="CHEBI:18420"/>
    </cofactor>
    <cofactor evidence="7">
        <name>Mn(2+)</name>
        <dbReference type="ChEBI" id="CHEBI:29035"/>
    </cofactor>
    <text evidence="4">Binds 2 Mg(2+) or Mn(2+) ions per subunit.</text>
</comment>
<comment type="activity regulation">
    <text evidence="10">The activity of this enzyme is not controlled by adenylation.</text>
</comment>
<comment type="biophysicochemical properties">
    <kinetics>
        <KM evidence="7">23.5 mM for L-glutamate (at pH 7.8 and 60 degrees Celsius)</KM>
        <KM evidence="7">15.2 mM for hydroxylamine (when a high concentration is used, at pH 7.8 and 60 degrees Celsius)</KM>
        <KM evidence="7">1.6 mM for hydroxylamine (when a low concentration is used, at pH 7.8 and 60 degrees Celsius)</KM>
        <KM evidence="7">28 mM for ATP (at pH 7.8 and 60 degrees Celsius)</KM>
        <KM evidence="7">5 mM for L-glutamine (at pH 7.2 and 60 degrees Celsius)</KM>
        <KM evidence="7">6.3 mM for ADP (at pH 7.2 and 60 degrees Celsius)</KM>
        <text>kcat is 2190 min(-1) towards L-glutamate in the synthetase reaction and 3900 min(-1) towards L-glutamine in the transferase reaction.</text>
    </kinetics>
    <phDependence>
        <text evidence="7">Optimum pH is 7.8 for the synthetase reaction and pH 7.2 for the transferase reaction.</text>
    </phDependence>
    <temperatureDependence>
        <text evidence="7">Optimum temperature is 60 degrees Celsius for both transferase and synthetase activities.</text>
    </temperatureDependence>
</comment>
<comment type="subunit">
    <text evidence="7">Oligomer of 12 subunits arranged in the form of two hexagons.</text>
</comment>
<comment type="subcellular location">
    <subcellularLocation>
        <location evidence="9">Cytoplasm</location>
    </subcellularLocation>
</comment>
<comment type="similarity">
    <text evidence="9">Belongs to the glutamine synthetase family.</text>
</comment>
<reference key="1">
    <citation type="journal article" date="1997" name="Appl. Environ. Microbiol.">
        <title>Characterization of recombinant glutamine synthetase from the hyperthermophilic archaeon Pyrococcus sp. strain KOD1.</title>
        <authorList>
            <person name="Adul Rahman R.N.Z."/>
            <person name="Jongsareejit B."/>
            <person name="Fujiwara S."/>
            <person name="Imanaka T."/>
        </authorList>
    </citation>
    <scope>NUCLEOTIDE SEQUENCE [GENOMIC DNA]</scope>
    <scope>FUNCTION</scope>
    <scope>CATALYTIC ACTIVITY</scope>
    <scope>GENE NAME</scope>
    <scope>SUBSTRATE SPECIFICITY</scope>
    <scope>BIOPHYSICOCHEMICAL PROPERTIES</scope>
    <scope>COFACTOR</scope>
    <scope>SUBUNIT</scope>
    <source>
        <strain>ATCC BAA-918 / JCM 12380 / KOD1</strain>
    </source>
</reference>
<reference key="2">
    <citation type="journal article" date="2005" name="Genome Res.">
        <title>Complete genome sequence of the hyperthermophilic archaeon Thermococcus kodakaraensis KOD1 and comparison with Pyrococcus genomes.</title>
        <authorList>
            <person name="Fukui T."/>
            <person name="Atomi H."/>
            <person name="Kanai T."/>
            <person name="Matsumi R."/>
            <person name="Fujiwara S."/>
            <person name="Imanaka T."/>
        </authorList>
    </citation>
    <scope>NUCLEOTIDE SEQUENCE [LARGE SCALE GENOMIC DNA]</scope>
    <source>
        <strain>ATCC BAA-918 / JCM 12380 / KOD1</strain>
    </source>
</reference>
<proteinExistence type="evidence at protein level"/>
<dbReference type="EC" id="6.3.1.2" evidence="7"/>
<dbReference type="EMBL" id="D86222">
    <property type="protein sequence ID" value="BAA20530.1"/>
    <property type="molecule type" value="Genomic_DNA"/>
</dbReference>
<dbReference type="EMBL" id="AP006878">
    <property type="protein sequence ID" value="BAD85985.1"/>
    <property type="molecule type" value="Genomic_DNA"/>
</dbReference>
<dbReference type="RefSeq" id="WP_011250747.1">
    <property type="nucleotide sequence ID" value="NC_006624.1"/>
</dbReference>
<dbReference type="SMR" id="O08467"/>
<dbReference type="FunCoup" id="O08467">
    <property type="interactions" value="75"/>
</dbReference>
<dbReference type="IntAct" id="O08467">
    <property type="interactions" value="1"/>
</dbReference>
<dbReference type="MINT" id="O08467"/>
<dbReference type="STRING" id="69014.TK1796"/>
<dbReference type="EnsemblBacteria" id="BAD85985">
    <property type="protein sequence ID" value="BAD85985"/>
    <property type="gene ID" value="TK1796"/>
</dbReference>
<dbReference type="GeneID" id="78448327"/>
<dbReference type="KEGG" id="tko:TK1796"/>
<dbReference type="PATRIC" id="fig|69014.16.peg.1752"/>
<dbReference type="eggNOG" id="arCOG01909">
    <property type="taxonomic scope" value="Archaea"/>
</dbReference>
<dbReference type="HOGENOM" id="CLU_017290_1_3_2"/>
<dbReference type="InParanoid" id="O08467"/>
<dbReference type="OrthoDB" id="36124at2157"/>
<dbReference type="PhylomeDB" id="O08467"/>
<dbReference type="BRENDA" id="6.3.1.2">
    <property type="organism ID" value="5027"/>
</dbReference>
<dbReference type="Proteomes" id="UP000000536">
    <property type="component" value="Chromosome"/>
</dbReference>
<dbReference type="GO" id="GO:0005737">
    <property type="term" value="C:cytoplasm"/>
    <property type="evidence" value="ECO:0007669"/>
    <property type="project" value="UniProtKB-SubCell"/>
</dbReference>
<dbReference type="GO" id="GO:0005524">
    <property type="term" value="F:ATP binding"/>
    <property type="evidence" value="ECO:0007669"/>
    <property type="project" value="UniProtKB-KW"/>
</dbReference>
<dbReference type="GO" id="GO:0004356">
    <property type="term" value="F:glutamine synthetase activity"/>
    <property type="evidence" value="ECO:0007669"/>
    <property type="project" value="UniProtKB-EC"/>
</dbReference>
<dbReference type="GO" id="GO:0046872">
    <property type="term" value="F:metal ion binding"/>
    <property type="evidence" value="ECO:0007669"/>
    <property type="project" value="UniProtKB-KW"/>
</dbReference>
<dbReference type="GO" id="GO:0006542">
    <property type="term" value="P:glutamine biosynthetic process"/>
    <property type="evidence" value="ECO:0007669"/>
    <property type="project" value="InterPro"/>
</dbReference>
<dbReference type="FunFam" id="3.30.590.10:FF:000003">
    <property type="entry name" value="Glutamine synthetase 2"/>
    <property type="match status" value="1"/>
</dbReference>
<dbReference type="Gene3D" id="3.10.20.70">
    <property type="entry name" value="Glutamine synthetase, N-terminal domain"/>
    <property type="match status" value="1"/>
</dbReference>
<dbReference type="Gene3D" id="3.30.590.10">
    <property type="entry name" value="Glutamine synthetase/guanido kinase, catalytic domain"/>
    <property type="match status" value="1"/>
</dbReference>
<dbReference type="InterPro" id="IPR008147">
    <property type="entry name" value="Gln_synt_N"/>
</dbReference>
<dbReference type="InterPro" id="IPR036651">
    <property type="entry name" value="Gln_synt_N_sf"/>
</dbReference>
<dbReference type="InterPro" id="IPR014746">
    <property type="entry name" value="Gln_synth/guanido_kin_cat_dom"/>
</dbReference>
<dbReference type="InterPro" id="IPR008146">
    <property type="entry name" value="Gln_synth_cat_dom"/>
</dbReference>
<dbReference type="InterPro" id="IPR027303">
    <property type="entry name" value="Gln_synth_gly_rich_site"/>
</dbReference>
<dbReference type="InterPro" id="IPR004809">
    <property type="entry name" value="Gln_synth_I"/>
</dbReference>
<dbReference type="InterPro" id="IPR027302">
    <property type="entry name" value="Gln_synth_N_conserv_site"/>
</dbReference>
<dbReference type="NCBIfam" id="TIGR00653">
    <property type="entry name" value="GlnA"/>
    <property type="match status" value="1"/>
</dbReference>
<dbReference type="PANTHER" id="PTHR43785">
    <property type="entry name" value="GAMMA-GLUTAMYLPUTRESCINE SYNTHETASE"/>
    <property type="match status" value="1"/>
</dbReference>
<dbReference type="PANTHER" id="PTHR43785:SF12">
    <property type="entry name" value="TYPE-1 GLUTAMINE SYNTHETASE 2"/>
    <property type="match status" value="1"/>
</dbReference>
<dbReference type="Pfam" id="PF00120">
    <property type="entry name" value="Gln-synt_C"/>
    <property type="match status" value="1"/>
</dbReference>
<dbReference type="Pfam" id="PF03951">
    <property type="entry name" value="Gln-synt_N"/>
    <property type="match status" value="1"/>
</dbReference>
<dbReference type="SMART" id="SM01230">
    <property type="entry name" value="Gln-synt_C"/>
    <property type="match status" value="1"/>
</dbReference>
<dbReference type="SUPFAM" id="SSF54368">
    <property type="entry name" value="Glutamine synthetase, N-terminal domain"/>
    <property type="match status" value="1"/>
</dbReference>
<dbReference type="SUPFAM" id="SSF55931">
    <property type="entry name" value="Glutamine synthetase/guanido kinase"/>
    <property type="match status" value="1"/>
</dbReference>
<dbReference type="PROSITE" id="PS00180">
    <property type="entry name" value="GLNA_1"/>
    <property type="match status" value="1"/>
</dbReference>
<dbReference type="PROSITE" id="PS00181">
    <property type="entry name" value="GLNA_ATP"/>
    <property type="match status" value="1"/>
</dbReference>
<dbReference type="PROSITE" id="PS51986">
    <property type="entry name" value="GS_BETA_GRASP"/>
    <property type="match status" value="1"/>
</dbReference>
<dbReference type="PROSITE" id="PS51987">
    <property type="entry name" value="GS_CATALYTIC"/>
    <property type="match status" value="1"/>
</dbReference>
<name>GLNA_THEKO</name>